<sequence>MSLLEQLDKNIAASGGLIVSCQPVPGSPLDKPEIVAAMALAAEQAGAVAVRIEGIDNLRVARSLVSVPIIGIIKRDLDESPVRITPFLDDVDALAQAGANIIAIDGTARQRPVTVEALLARIHHHHLLAMADCSSVDDGLACQRLGADIIGTTMSGYTTPDTPEEPDLPLVKALHDAGCRVIAEGRYNSPELAAKAIRYGAWAVTVGSAITRLEYICGWYNDALKKAAS</sequence>
<comment type="function">
    <text evidence="1">Converts N-acetylmannosamine-6-phosphate (ManNAc-6-P) to N-acetylglucosamine-6-phosphate (GlcNAc-6-P).</text>
</comment>
<comment type="catalytic activity">
    <reaction evidence="1">
        <text>an N-acyl-D-glucosamine 6-phosphate = an N-acyl-D-mannosamine 6-phosphate</text>
        <dbReference type="Rhea" id="RHEA:23932"/>
        <dbReference type="ChEBI" id="CHEBI:57599"/>
        <dbReference type="ChEBI" id="CHEBI:57666"/>
        <dbReference type="EC" id="5.1.3.9"/>
    </reaction>
</comment>
<comment type="pathway">
    <text evidence="1">Amino-sugar metabolism; N-acetylneuraminate degradation; D-fructose 6-phosphate from N-acetylneuraminate: step 3/5.</text>
</comment>
<comment type="similarity">
    <text evidence="1">Belongs to the NanE family.</text>
</comment>
<feature type="chain" id="PRO_1000085728" description="Putative N-acetylmannosamine-6-phosphate 2-epimerase">
    <location>
        <begin position="1"/>
        <end position="229"/>
    </location>
</feature>
<evidence type="ECO:0000255" key="1">
    <source>
        <dbReference type="HAMAP-Rule" id="MF_01235"/>
    </source>
</evidence>
<protein>
    <recommendedName>
        <fullName evidence="1">Putative N-acetylmannosamine-6-phosphate 2-epimerase</fullName>
        <ecNumber evidence="1">5.1.3.9</ecNumber>
    </recommendedName>
    <alternativeName>
        <fullName evidence="1">ManNAc-6-P epimerase</fullName>
    </alternativeName>
</protein>
<gene>
    <name evidence="1" type="primary">nanE</name>
    <name type="ordered locus">SARI_04287</name>
</gene>
<dbReference type="EC" id="5.1.3.9" evidence="1"/>
<dbReference type="EMBL" id="CP000880">
    <property type="protein sequence ID" value="ABX24070.1"/>
    <property type="molecule type" value="Genomic_DNA"/>
</dbReference>
<dbReference type="SMR" id="A9MNY8"/>
<dbReference type="STRING" id="41514.SARI_04287"/>
<dbReference type="KEGG" id="ses:SARI_04287"/>
<dbReference type="HOGENOM" id="CLU_086300_0_0_6"/>
<dbReference type="UniPathway" id="UPA00629">
    <property type="reaction ID" value="UER00682"/>
</dbReference>
<dbReference type="Proteomes" id="UP000002084">
    <property type="component" value="Chromosome"/>
</dbReference>
<dbReference type="GO" id="GO:0005829">
    <property type="term" value="C:cytosol"/>
    <property type="evidence" value="ECO:0007669"/>
    <property type="project" value="TreeGrafter"/>
</dbReference>
<dbReference type="GO" id="GO:0047465">
    <property type="term" value="F:N-acylglucosamine-6-phosphate 2-epimerase activity"/>
    <property type="evidence" value="ECO:0007669"/>
    <property type="project" value="UniProtKB-EC"/>
</dbReference>
<dbReference type="GO" id="GO:0005975">
    <property type="term" value="P:carbohydrate metabolic process"/>
    <property type="evidence" value="ECO:0007669"/>
    <property type="project" value="UniProtKB-UniRule"/>
</dbReference>
<dbReference type="GO" id="GO:0006053">
    <property type="term" value="P:N-acetylmannosamine catabolic process"/>
    <property type="evidence" value="ECO:0007669"/>
    <property type="project" value="TreeGrafter"/>
</dbReference>
<dbReference type="GO" id="GO:0019262">
    <property type="term" value="P:N-acetylneuraminate catabolic process"/>
    <property type="evidence" value="ECO:0007669"/>
    <property type="project" value="UniProtKB-UniRule"/>
</dbReference>
<dbReference type="CDD" id="cd04729">
    <property type="entry name" value="NanE"/>
    <property type="match status" value="1"/>
</dbReference>
<dbReference type="FunFam" id="3.20.20.70:FF:000035">
    <property type="entry name" value="Putative N-acetylmannosamine-6-phosphate 2-epimerase"/>
    <property type="match status" value="1"/>
</dbReference>
<dbReference type="Gene3D" id="3.20.20.70">
    <property type="entry name" value="Aldolase class I"/>
    <property type="match status" value="1"/>
</dbReference>
<dbReference type="HAMAP" id="MF_01235">
    <property type="entry name" value="ManNAc6P_epimer"/>
    <property type="match status" value="1"/>
</dbReference>
<dbReference type="InterPro" id="IPR013785">
    <property type="entry name" value="Aldolase_TIM"/>
</dbReference>
<dbReference type="InterPro" id="IPR007260">
    <property type="entry name" value="NanE"/>
</dbReference>
<dbReference type="InterPro" id="IPR011060">
    <property type="entry name" value="RibuloseP-bd_barrel"/>
</dbReference>
<dbReference type="NCBIfam" id="NF002231">
    <property type="entry name" value="PRK01130.1"/>
    <property type="match status" value="1"/>
</dbReference>
<dbReference type="PANTHER" id="PTHR36204">
    <property type="entry name" value="N-ACETYLMANNOSAMINE-6-PHOSPHATE 2-EPIMERASE-RELATED"/>
    <property type="match status" value="1"/>
</dbReference>
<dbReference type="PANTHER" id="PTHR36204:SF1">
    <property type="entry name" value="N-ACETYLMANNOSAMINE-6-PHOSPHATE 2-EPIMERASE-RELATED"/>
    <property type="match status" value="1"/>
</dbReference>
<dbReference type="Pfam" id="PF04131">
    <property type="entry name" value="NanE"/>
    <property type="match status" value="1"/>
</dbReference>
<dbReference type="SUPFAM" id="SSF51366">
    <property type="entry name" value="Ribulose-phoshate binding barrel"/>
    <property type="match status" value="1"/>
</dbReference>
<reference key="1">
    <citation type="submission" date="2007-11" db="EMBL/GenBank/DDBJ databases">
        <authorList>
            <consortium name="The Salmonella enterica serovar Arizonae Genome Sequencing Project"/>
            <person name="McClelland M."/>
            <person name="Sanderson E.K."/>
            <person name="Porwollik S."/>
            <person name="Spieth J."/>
            <person name="Clifton W.S."/>
            <person name="Fulton R."/>
            <person name="Chunyan W."/>
            <person name="Wollam A."/>
            <person name="Shah N."/>
            <person name="Pepin K."/>
            <person name="Bhonagiri V."/>
            <person name="Nash W."/>
            <person name="Johnson M."/>
            <person name="Thiruvilangam P."/>
            <person name="Wilson R."/>
        </authorList>
    </citation>
    <scope>NUCLEOTIDE SEQUENCE [LARGE SCALE GENOMIC DNA]</scope>
    <source>
        <strain>ATCC BAA-731 / CDC346-86 / RSK2980</strain>
    </source>
</reference>
<organism>
    <name type="scientific">Salmonella arizonae (strain ATCC BAA-731 / CDC346-86 / RSK2980)</name>
    <dbReference type="NCBI Taxonomy" id="41514"/>
    <lineage>
        <taxon>Bacteria</taxon>
        <taxon>Pseudomonadati</taxon>
        <taxon>Pseudomonadota</taxon>
        <taxon>Gammaproteobacteria</taxon>
        <taxon>Enterobacterales</taxon>
        <taxon>Enterobacteriaceae</taxon>
        <taxon>Salmonella</taxon>
    </lineage>
</organism>
<accession>A9MNY8</accession>
<name>NANE_SALAR</name>
<proteinExistence type="inferred from homology"/>
<keyword id="KW-0119">Carbohydrate metabolism</keyword>
<keyword id="KW-0413">Isomerase</keyword>
<keyword id="KW-1185">Reference proteome</keyword>